<evidence type="ECO:0000250" key="1">
    <source>
        <dbReference type="UniProtKB" id="Q2FXT0"/>
    </source>
</evidence>
<evidence type="ECO:0000255" key="2">
    <source>
        <dbReference type="HAMAP-Rule" id="MF_00539"/>
    </source>
</evidence>
<evidence type="ECO:0000256" key="3">
    <source>
        <dbReference type="SAM" id="MobiDB-lite"/>
    </source>
</evidence>
<evidence type="ECO:0000305" key="4"/>
<proteinExistence type="inferred from homology"/>
<organism>
    <name type="scientific">Streptococcus pneumoniae serotype 4 (strain ATCC BAA-334 / TIGR4)</name>
    <dbReference type="NCBI Taxonomy" id="170187"/>
    <lineage>
        <taxon>Bacteria</taxon>
        <taxon>Bacillati</taxon>
        <taxon>Bacillota</taxon>
        <taxon>Bacilli</taxon>
        <taxon>Lactobacillales</taxon>
        <taxon>Streptococcaceae</taxon>
        <taxon>Streptococcus</taxon>
    </lineage>
</organism>
<name>RL27_STRPN</name>
<reference key="1">
    <citation type="journal article" date="2001" name="Science">
        <title>Complete genome sequence of a virulent isolate of Streptococcus pneumoniae.</title>
        <authorList>
            <person name="Tettelin H."/>
            <person name="Nelson K.E."/>
            <person name="Paulsen I.T."/>
            <person name="Eisen J.A."/>
            <person name="Read T.D."/>
            <person name="Peterson S.N."/>
            <person name="Heidelberg J.F."/>
            <person name="DeBoy R.T."/>
            <person name="Haft D.H."/>
            <person name="Dodson R.J."/>
            <person name="Durkin A.S."/>
            <person name="Gwinn M.L."/>
            <person name="Kolonay J.F."/>
            <person name="Nelson W.C."/>
            <person name="Peterson J.D."/>
            <person name="Umayam L.A."/>
            <person name="White O."/>
            <person name="Salzberg S.L."/>
            <person name="Lewis M.R."/>
            <person name="Radune D."/>
            <person name="Holtzapple E.K."/>
            <person name="Khouri H.M."/>
            <person name="Wolf A.M."/>
            <person name="Utterback T.R."/>
            <person name="Hansen C.L."/>
            <person name="McDonald L.A."/>
            <person name="Feldblyum T.V."/>
            <person name="Angiuoli S.V."/>
            <person name="Dickinson T."/>
            <person name="Hickey E.K."/>
            <person name="Holt I.E."/>
            <person name="Loftus B.J."/>
            <person name="Yang F."/>
            <person name="Smith H.O."/>
            <person name="Venter J.C."/>
            <person name="Dougherty B.A."/>
            <person name="Morrison D.A."/>
            <person name="Hollingshead S.K."/>
            <person name="Fraser C.M."/>
        </authorList>
    </citation>
    <scope>NUCLEOTIDE SEQUENCE [LARGE SCALE GENOMIC DNA]</scope>
    <source>
        <strain>ATCC BAA-334 / TIGR4</strain>
    </source>
</reference>
<keyword id="KW-1185">Reference proteome</keyword>
<keyword id="KW-0687">Ribonucleoprotein</keyword>
<keyword id="KW-0689">Ribosomal protein</keyword>
<accession>P66135</accession>
<accession>Q97QU2</accession>
<gene>
    <name evidence="2" type="primary">rpmA</name>
    <name type="ordered locus">SP_1107</name>
</gene>
<dbReference type="EMBL" id="AE005672">
    <property type="protein sequence ID" value="AAK75218.1"/>
    <property type="molecule type" value="Genomic_DNA"/>
</dbReference>
<dbReference type="PIR" id="A95128">
    <property type="entry name" value="A95128"/>
</dbReference>
<dbReference type="SMR" id="P66135"/>
<dbReference type="PaxDb" id="170187-SP_1107"/>
<dbReference type="EnsemblBacteria" id="AAK75218">
    <property type="protein sequence ID" value="AAK75218"/>
    <property type="gene ID" value="SP_1107"/>
</dbReference>
<dbReference type="KEGG" id="spn:SP_1107"/>
<dbReference type="eggNOG" id="COG0211">
    <property type="taxonomic scope" value="Bacteria"/>
</dbReference>
<dbReference type="PhylomeDB" id="P66135"/>
<dbReference type="Proteomes" id="UP000000585">
    <property type="component" value="Chromosome"/>
</dbReference>
<dbReference type="GO" id="GO:0022625">
    <property type="term" value="C:cytosolic large ribosomal subunit"/>
    <property type="evidence" value="ECO:0007669"/>
    <property type="project" value="TreeGrafter"/>
</dbReference>
<dbReference type="GO" id="GO:0003735">
    <property type="term" value="F:structural constituent of ribosome"/>
    <property type="evidence" value="ECO:0007669"/>
    <property type="project" value="InterPro"/>
</dbReference>
<dbReference type="GO" id="GO:0006412">
    <property type="term" value="P:translation"/>
    <property type="evidence" value="ECO:0007669"/>
    <property type="project" value="UniProtKB-UniRule"/>
</dbReference>
<dbReference type="FunFam" id="2.40.50.100:FF:000004">
    <property type="entry name" value="50S ribosomal protein L27"/>
    <property type="match status" value="1"/>
</dbReference>
<dbReference type="Gene3D" id="2.40.50.100">
    <property type="match status" value="1"/>
</dbReference>
<dbReference type="HAMAP" id="MF_00539">
    <property type="entry name" value="Ribosomal_bL27"/>
    <property type="match status" value="1"/>
</dbReference>
<dbReference type="InterPro" id="IPR001684">
    <property type="entry name" value="Ribosomal_bL27"/>
</dbReference>
<dbReference type="InterPro" id="IPR018261">
    <property type="entry name" value="Ribosomal_bL27_CS"/>
</dbReference>
<dbReference type="NCBIfam" id="TIGR00062">
    <property type="entry name" value="L27"/>
    <property type="match status" value="1"/>
</dbReference>
<dbReference type="PANTHER" id="PTHR15893:SF0">
    <property type="entry name" value="LARGE RIBOSOMAL SUBUNIT PROTEIN BL27M"/>
    <property type="match status" value="1"/>
</dbReference>
<dbReference type="PANTHER" id="PTHR15893">
    <property type="entry name" value="RIBOSOMAL PROTEIN L27"/>
    <property type="match status" value="1"/>
</dbReference>
<dbReference type="Pfam" id="PF01016">
    <property type="entry name" value="Ribosomal_L27"/>
    <property type="match status" value="1"/>
</dbReference>
<dbReference type="PRINTS" id="PR00063">
    <property type="entry name" value="RIBOSOMALL27"/>
</dbReference>
<dbReference type="SUPFAM" id="SSF110324">
    <property type="entry name" value="Ribosomal L27 protein-like"/>
    <property type="match status" value="1"/>
</dbReference>
<dbReference type="PROSITE" id="PS00831">
    <property type="entry name" value="RIBOSOMAL_L27"/>
    <property type="match status" value="1"/>
</dbReference>
<comment type="PTM">
    <text evidence="1">The N-terminus is cleaved by ribosomal processing cysteine protease Prp.</text>
</comment>
<comment type="similarity">
    <text evidence="2">Belongs to the bacterial ribosomal protein bL27 family.</text>
</comment>
<feature type="propeptide" id="PRO_0000459951" evidence="1">
    <location>
        <begin position="1"/>
        <end position="9"/>
    </location>
</feature>
<feature type="chain" id="PRO_0000181178" description="Large ribosomal subunit protein bL27">
    <location>
        <begin position="10"/>
        <end position="94"/>
    </location>
</feature>
<feature type="region of interest" description="Disordered" evidence="3">
    <location>
        <begin position="9"/>
        <end position="33"/>
    </location>
</feature>
<protein>
    <recommendedName>
        <fullName evidence="2">Large ribosomal subunit protein bL27</fullName>
    </recommendedName>
    <alternativeName>
        <fullName evidence="4">50S ribosomal protein L27</fullName>
    </alternativeName>
</protein>
<sequence>MTLNNLQLFAHKKGGGSTSNGRDSQAKRLGAKAADGQTVTGGSILYRQRGTHIYPGVNVGRGGDDTLFAKVEGVVRFERKGRDKKQVSVYPIAK</sequence>